<sequence>MTMEALQFLLAAPPGAYDPVARTIEDEPRPSQPPTSALALDIRGLRKSFGDNDVLRGIDLHIPAGQFVTIVGRSGCGKSTLLRLIAGLETPTAGHIVFGEDKLPGDVRVMFQEPRLLPWARVLANVEVGLGTERNSPDARARADAALIEVGLDDKRGEWPAVLSGGQKQRVALARALVSRPRVLAFDEPLGALDALTRIAMQRLLEQVWQAQGFTAILVTHDVAEAVALADRVLVIEDGRIAKDLPIDLPRPRQRGSAELAALEGEILRDLLKGAEDTFEL</sequence>
<protein>
    <recommendedName>
        <fullName evidence="1">Aliphatic sulfonates import ATP-binding protein SsuB</fullName>
        <ecNumber evidence="1">7.6.2.14</ecNumber>
    </recommendedName>
</protein>
<dbReference type="EC" id="7.6.2.14" evidence="1"/>
<dbReference type="EMBL" id="BX572601">
    <property type="protein sequence ID" value="CAE28051.1"/>
    <property type="molecule type" value="Genomic_DNA"/>
</dbReference>
<dbReference type="RefSeq" id="WP_011158160.1">
    <property type="nucleotide sequence ID" value="NZ_CP116810.1"/>
</dbReference>
<dbReference type="SMR" id="Q6N6K5"/>
<dbReference type="STRING" id="258594.RPA2610"/>
<dbReference type="GeneID" id="66893681"/>
<dbReference type="eggNOG" id="COG1116">
    <property type="taxonomic scope" value="Bacteria"/>
</dbReference>
<dbReference type="HOGENOM" id="CLU_000604_1_22_5"/>
<dbReference type="PhylomeDB" id="Q6N6K5"/>
<dbReference type="GO" id="GO:0005886">
    <property type="term" value="C:plasma membrane"/>
    <property type="evidence" value="ECO:0007669"/>
    <property type="project" value="UniProtKB-SubCell"/>
</dbReference>
<dbReference type="GO" id="GO:0005524">
    <property type="term" value="F:ATP binding"/>
    <property type="evidence" value="ECO:0007669"/>
    <property type="project" value="UniProtKB-KW"/>
</dbReference>
<dbReference type="GO" id="GO:0016887">
    <property type="term" value="F:ATP hydrolysis activity"/>
    <property type="evidence" value="ECO:0007669"/>
    <property type="project" value="InterPro"/>
</dbReference>
<dbReference type="FunFam" id="3.40.50.300:FF:000653">
    <property type="entry name" value="Aliphatic sulfonates import ATP-binding protein SsuB"/>
    <property type="match status" value="1"/>
</dbReference>
<dbReference type="Gene3D" id="3.40.50.300">
    <property type="entry name" value="P-loop containing nucleotide triphosphate hydrolases"/>
    <property type="match status" value="1"/>
</dbReference>
<dbReference type="InterPro" id="IPR003593">
    <property type="entry name" value="AAA+_ATPase"/>
</dbReference>
<dbReference type="InterPro" id="IPR003439">
    <property type="entry name" value="ABC_transporter-like_ATP-bd"/>
</dbReference>
<dbReference type="InterPro" id="IPR017871">
    <property type="entry name" value="ABC_transporter-like_CS"/>
</dbReference>
<dbReference type="InterPro" id="IPR050166">
    <property type="entry name" value="ABC_transporter_ATP-bind"/>
</dbReference>
<dbReference type="InterPro" id="IPR027417">
    <property type="entry name" value="P-loop_NTPase"/>
</dbReference>
<dbReference type="PANTHER" id="PTHR42788:SF17">
    <property type="entry name" value="ALIPHATIC SULFONATES IMPORT ATP-BINDING PROTEIN SSUB"/>
    <property type="match status" value="1"/>
</dbReference>
<dbReference type="PANTHER" id="PTHR42788">
    <property type="entry name" value="TAURINE IMPORT ATP-BINDING PROTEIN-RELATED"/>
    <property type="match status" value="1"/>
</dbReference>
<dbReference type="Pfam" id="PF00005">
    <property type="entry name" value="ABC_tran"/>
    <property type="match status" value="1"/>
</dbReference>
<dbReference type="SMART" id="SM00382">
    <property type="entry name" value="AAA"/>
    <property type="match status" value="1"/>
</dbReference>
<dbReference type="SUPFAM" id="SSF52540">
    <property type="entry name" value="P-loop containing nucleoside triphosphate hydrolases"/>
    <property type="match status" value="1"/>
</dbReference>
<dbReference type="PROSITE" id="PS00211">
    <property type="entry name" value="ABC_TRANSPORTER_1"/>
    <property type="match status" value="1"/>
</dbReference>
<dbReference type="PROSITE" id="PS50893">
    <property type="entry name" value="ABC_TRANSPORTER_2"/>
    <property type="match status" value="1"/>
</dbReference>
<dbReference type="PROSITE" id="PS51291">
    <property type="entry name" value="SSUB"/>
    <property type="match status" value="1"/>
</dbReference>
<name>SSUB_RHOPA</name>
<gene>
    <name evidence="1" type="primary">ssuB</name>
    <name type="ordered locus">RPA2610</name>
</gene>
<evidence type="ECO:0000255" key="1">
    <source>
        <dbReference type="HAMAP-Rule" id="MF_01724"/>
    </source>
</evidence>
<accession>Q6N6K5</accession>
<proteinExistence type="inferred from homology"/>
<feature type="chain" id="PRO_0000279958" description="Aliphatic sulfonates import ATP-binding protein SsuB">
    <location>
        <begin position="1"/>
        <end position="281"/>
    </location>
</feature>
<feature type="domain" description="ABC transporter" evidence="1">
    <location>
        <begin position="40"/>
        <end position="263"/>
    </location>
</feature>
<feature type="binding site" evidence="1">
    <location>
        <begin position="72"/>
        <end position="79"/>
    </location>
    <ligand>
        <name>ATP</name>
        <dbReference type="ChEBI" id="CHEBI:30616"/>
    </ligand>
</feature>
<reference key="1">
    <citation type="journal article" date="2004" name="Nat. Biotechnol.">
        <title>Complete genome sequence of the metabolically versatile photosynthetic bacterium Rhodopseudomonas palustris.</title>
        <authorList>
            <person name="Larimer F.W."/>
            <person name="Chain P."/>
            <person name="Hauser L."/>
            <person name="Lamerdin J.E."/>
            <person name="Malfatti S."/>
            <person name="Do L."/>
            <person name="Land M.L."/>
            <person name="Pelletier D.A."/>
            <person name="Beatty J.T."/>
            <person name="Lang A.S."/>
            <person name="Tabita F.R."/>
            <person name="Gibson J.L."/>
            <person name="Hanson T.E."/>
            <person name="Bobst C."/>
            <person name="Torres y Torres J.L."/>
            <person name="Peres C."/>
            <person name="Harrison F.H."/>
            <person name="Gibson J."/>
            <person name="Harwood C.S."/>
        </authorList>
    </citation>
    <scope>NUCLEOTIDE SEQUENCE [LARGE SCALE GENOMIC DNA]</scope>
    <source>
        <strain>ATCC BAA-98 / CGA009</strain>
    </source>
</reference>
<organism>
    <name type="scientific">Rhodopseudomonas palustris (strain ATCC BAA-98 / CGA009)</name>
    <dbReference type="NCBI Taxonomy" id="258594"/>
    <lineage>
        <taxon>Bacteria</taxon>
        <taxon>Pseudomonadati</taxon>
        <taxon>Pseudomonadota</taxon>
        <taxon>Alphaproteobacteria</taxon>
        <taxon>Hyphomicrobiales</taxon>
        <taxon>Nitrobacteraceae</taxon>
        <taxon>Rhodopseudomonas</taxon>
    </lineage>
</organism>
<keyword id="KW-0067">ATP-binding</keyword>
<keyword id="KW-0997">Cell inner membrane</keyword>
<keyword id="KW-1003">Cell membrane</keyword>
<keyword id="KW-0472">Membrane</keyword>
<keyword id="KW-0547">Nucleotide-binding</keyword>
<keyword id="KW-1278">Translocase</keyword>
<keyword id="KW-0813">Transport</keyword>
<comment type="function">
    <text evidence="1">Part of the ABC transporter complex SsuABC involved in aliphatic sulfonates import. Responsible for energy coupling to the transport system.</text>
</comment>
<comment type="catalytic activity">
    <reaction evidence="1">
        <text>ATP + H2O + aliphatic sulfonate-[sulfonate-binding protein]Side 1 = ADP + phosphate + aliphatic sulfonateSide 2 + [sulfonate-binding protein]Side 1.</text>
        <dbReference type="EC" id="7.6.2.14"/>
    </reaction>
</comment>
<comment type="subunit">
    <text evidence="1">The complex is composed of two ATP-binding proteins (SsuB), two transmembrane proteins (SsuC) and a solute-binding protein (SsuA).</text>
</comment>
<comment type="subcellular location">
    <subcellularLocation>
        <location evidence="1">Cell inner membrane</location>
        <topology evidence="1">Peripheral membrane protein</topology>
    </subcellularLocation>
</comment>
<comment type="similarity">
    <text evidence="1">Belongs to the ABC transporter superfamily. Aliphatic sulfonates importer (TC 3.A.1.17.2) family.</text>
</comment>